<evidence type="ECO:0000255" key="1">
    <source>
        <dbReference type="HAMAP-Rule" id="MF_01326"/>
    </source>
</evidence>
<evidence type="ECO:0000305" key="2"/>
<protein>
    <recommendedName>
        <fullName evidence="1">Large ribosomal subunit protein uL24</fullName>
    </recommendedName>
    <alternativeName>
        <fullName evidence="2">50S ribosomal protein L24</fullName>
    </alternativeName>
</protein>
<proteinExistence type="inferred from homology"/>
<accession>A5GIT4</accession>
<sequence length="118" mass="13029">MATATSQSAPTQRIKMRLRKGDTVQVIAGKDKGKTGEVLRTLPNENRVIVEGVNMRTRHVKPTQEGESGRIVTEEASLHASNVMLYSTAKKVASRVELITEKDGSKKRRLKKTGEVID</sequence>
<feature type="chain" id="PRO_0000355722" description="Large ribosomal subunit protein uL24">
    <location>
        <begin position="1"/>
        <end position="118"/>
    </location>
</feature>
<keyword id="KW-1185">Reference proteome</keyword>
<keyword id="KW-0687">Ribonucleoprotein</keyword>
<keyword id="KW-0689">Ribosomal protein</keyword>
<keyword id="KW-0694">RNA-binding</keyword>
<keyword id="KW-0699">rRNA-binding</keyword>
<dbReference type="EMBL" id="CT971583">
    <property type="protein sequence ID" value="CAK22849.1"/>
    <property type="molecule type" value="Genomic_DNA"/>
</dbReference>
<dbReference type="SMR" id="A5GIT4"/>
<dbReference type="STRING" id="32051.SynWH7803_0423"/>
<dbReference type="KEGG" id="syx:SynWH7803_0423"/>
<dbReference type="eggNOG" id="COG0198">
    <property type="taxonomic scope" value="Bacteria"/>
</dbReference>
<dbReference type="HOGENOM" id="CLU_093315_2_3_3"/>
<dbReference type="OrthoDB" id="9807419at2"/>
<dbReference type="Proteomes" id="UP000001566">
    <property type="component" value="Chromosome"/>
</dbReference>
<dbReference type="GO" id="GO:1990904">
    <property type="term" value="C:ribonucleoprotein complex"/>
    <property type="evidence" value="ECO:0007669"/>
    <property type="project" value="UniProtKB-KW"/>
</dbReference>
<dbReference type="GO" id="GO:0005840">
    <property type="term" value="C:ribosome"/>
    <property type="evidence" value="ECO:0007669"/>
    <property type="project" value="UniProtKB-KW"/>
</dbReference>
<dbReference type="GO" id="GO:0019843">
    <property type="term" value="F:rRNA binding"/>
    <property type="evidence" value="ECO:0007669"/>
    <property type="project" value="UniProtKB-UniRule"/>
</dbReference>
<dbReference type="GO" id="GO:0003735">
    <property type="term" value="F:structural constituent of ribosome"/>
    <property type="evidence" value="ECO:0007669"/>
    <property type="project" value="InterPro"/>
</dbReference>
<dbReference type="GO" id="GO:0006412">
    <property type="term" value="P:translation"/>
    <property type="evidence" value="ECO:0007669"/>
    <property type="project" value="UniProtKB-UniRule"/>
</dbReference>
<dbReference type="CDD" id="cd06089">
    <property type="entry name" value="KOW_RPL26"/>
    <property type="match status" value="1"/>
</dbReference>
<dbReference type="Gene3D" id="2.30.30.30">
    <property type="match status" value="1"/>
</dbReference>
<dbReference type="HAMAP" id="MF_01326_B">
    <property type="entry name" value="Ribosomal_uL24_B"/>
    <property type="match status" value="1"/>
</dbReference>
<dbReference type="InterPro" id="IPR005824">
    <property type="entry name" value="KOW"/>
</dbReference>
<dbReference type="InterPro" id="IPR014722">
    <property type="entry name" value="Rib_uL2_dom2"/>
</dbReference>
<dbReference type="InterPro" id="IPR003256">
    <property type="entry name" value="Ribosomal_uL24"/>
</dbReference>
<dbReference type="InterPro" id="IPR005825">
    <property type="entry name" value="Ribosomal_uL24_CS"/>
</dbReference>
<dbReference type="InterPro" id="IPR041988">
    <property type="entry name" value="Ribosomal_uL24_KOW"/>
</dbReference>
<dbReference type="InterPro" id="IPR008991">
    <property type="entry name" value="Translation_prot_SH3-like_sf"/>
</dbReference>
<dbReference type="NCBIfam" id="TIGR01079">
    <property type="entry name" value="rplX_bact"/>
    <property type="match status" value="1"/>
</dbReference>
<dbReference type="PANTHER" id="PTHR12903">
    <property type="entry name" value="MITOCHONDRIAL RIBOSOMAL PROTEIN L24"/>
    <property type="match status" value="1"/>
</dbReference>
<dbReference type="Pfam" id="PF00467">
    <property type="entry name" value="KOW"/>
    <property type="match status" value="1"/>
</dbReference>
<dbReference type="Pfam" id="PF17136">
    <property type="entry name" value="ribosomal_L24"/>
    <property type="match status" value="1"/>
</dbReference>
<dbReference type="SMART" id="SM00739">
    <property type="entry name" value="KOW"/>
    <property type="match status" value="1"/>
</dbReference>
<dbReference type="SUPFAM" id="SSF50104">
    <property type="entry name" value="Translation proteins SH3-like domain"/>
    <property type="match status" value="1"/>
</dbReference>
<dbReference type="PROSITE" id="PS01108">
    <property type="entry name" value="RIBOSOMAL_L24"/>
    <property type="match status" value="1"/>
</dbReference>
<reference key="1">
    <citation type="submission" date="2006-05" db="EMBL/GenBank/DDBJ databases">
        <authorList>
            <consortium name="Genoscope"/>
        </authorList>
    </citation>
    <scope>NUCLEOTIDE SEQUENCE [LARGE SCALE GENOMIC DNA]</scope>
    <source>
        <strain>WH7803</strain>
    </source>
</reference>
<name>RL24_SYNPW</name>
<gene>
    <name evidence="1" type="primary">rplX</name>
    <name evidence="1" type="synonym">rpl24</name>
    <name type="ordered locus">SynWH7803_0423</name>
</gene>
<organism>
    <name type="scientific">Synechococcus sp. (strain WH7803)</name>
    <dbReference type="NCBI Taxonomy" id="32051"/>
    <lineage>
        <taxon>Bacteria</taxon>
        <taxon>Bacillati</taxon>
        <taxon>Cyanobacteriota</taxon>
        <taxon>Cyanophyceae</taxon>
        <taxon>Synechococcales</taxon>
        <taxon>Synechococcaceae</taxon>
        <taxon>Synechococcus</taxon>
    </lineage>
</organism>
<comment type="function">
    <text evidence="1">One of two assembly initiator proteins, it binds directly to the 5'-end of the 23S rRNA, where it nucleates assembly of the 50S subunit.</text>
</comment>
<comment type="function">
    <text evidence="1">One of the proteins that surrounds the polypeptide exit tunnel on the outside of the subunit.</text>
</comment>
<comment type="subunit">
    <text evidence="1">Part of the 50S ribosomal subunit.</text>
</comment>
<comment type="similarity">
    <text evidence="1">Belongs to the universal ribosomal protein uL24 family.</text>
</comment>